<comment type="subcellular location">
    <subcellularLocation>
        <location>Virion</location>
    </subcellularLocation>
</comment>
<evidence type="ECO:0000255" key="1"/>
<evidence type="ECO:0000256" key="2">
    <source>
        <dbReference type="SAM" id="MobiDB-lite"/>
    </source>
</evidence>
<accession>Q3V4U2</accession>
<reference key="1">
    <citation type="journal article" date="2005" name="Nature">
        <title>Virology: independent virus development outside a host.</title>
        <authorList>
            <person name="Haring M."/>
            <person name="Vestergaard G."/>
            <person name="Rachel R."/>
            <person name="Chen L."/>
            <person name="Garrett R.A."/>
            <person name="Prangishvili D."/>
        </authorList>
    </citation>
    <scope>NUCLEOTIDE SEQUENCE [GENOMIC DNA]</scope>
</reference>
<keyword id="KW-0175">Coiled coil</keyword>
<keyword id="KW-1185">Reference proteome</keyword>
<keyword id="KW-0946">Virion</keyword>
<dbReference type="EMBL" id="AJ888457">
    <property type="protein sequence ID" value="CAI59872.1"/>
    <property type="molecule type" value="Genomic_DNA"/>
</dbReference>
<dbReference type="RefSeq" id="YP_319894.1">
    <property type="nucleotide sequence ID" value="NC_007409.1"/>
</dbReference>
<dbReference type="GeneID" id="4484274"/>
<dbReference type="KEGG" id="vg:4484274"/>
<dbReference type="Proteomes" id="UP000002150">
    <property type="component" value="Genome"/>
</dbReference>
<dbReference type="GO" id="GO:0044423">
    <property type="term" value="C:virion component"/>
    <property type="evidence" value="ECO:0007669"/>
    <property type="project" value="UniProtKB-KW"/>
</dbReference>
<organismHost>
    <name type="scientific">Acidianus convivator</name>
    <dbReference type="NCBI Taxonomy" id="269667"/>
</organismHost>
<sequence>MVAQEMAQEKNLQPWEYVYDLLMPAKIPPRKRTKYIYLALAVPPTMEFNKKISKGDTEDLELPVYPVAFNTRPGNNKADRIATRKDLLTRLGTYPTVGLYANDYDFTMLIKNLDFKSEFVPGYFPLAVLELHFERDITANPEDYGLKPIDGREWVFDPDGSYKVTSGSLFNIAKAEIVDPNSVTINLDKNSKEFNALNGYGVVQFYIDLNNAPWEAYAKAAEECESVGGIYRHDTNEGPSYCTLPLNKEANIKASEFILQLYDMIKSKIASEDFLKREMTFLAPGPKQIEDFLKNEMMYQPPGPKRIPVKPVIGKTFQEMVKVAEQEMAKVAEKRDLILGGEEKEPKQKSQEKLFNPFAIDYEMLTEEQQQQNETEEEEKNNTVKLS</sequence>
<organism>
    <name type="scientific">Acidianus two-tailed virus</name>
    <name type="common">ATV</name>
    <dbReference type="NCBI Taxonomy" id="315953"/>
    <lineage>
        <taxon>Viruses</taxon>
        <taxon>Viruses incertae sedis</taxon>
        <taxon>Bicaudaviridae</taxon>
        <taxon>Bicaudavirus</taxon>
    </lineage>
</organism>
<protein>
    <recommendedName>
        <fullName>Structural protein ORF387</fullName>
    </recommendedName>
</protein>
<name>Y387_ATV</name>
<feature type="chain" id="PRO_0000389054" description="Structural protein ORF387">
    <location>
        <begin position="1"/>
        <end position="387"/>
    </location>
</feature>
<feature type="region of interest" description="Disordered" evidence="2">
    <location>
        <begin position="365"/>
        <end position="387"/>
    </location>
</feature>
<feature type="coiled-coil region" evidence="1">
    <location>
        <begin position="315"/>
        <end position="387"/>
    </location>
</feature>
<proteinExistence type="predicted"/>